<sequence length="205" mass="23440">MFIVLEGIDGAGKSTQAKLLAEWFENRGYEVVLTKEPTDTPFGKLIRRLVLTGGKEGIIDGAKISHEAEALLFAADRAEHVDKLIKPSLEAGKVVISDRYFYSSLAYQWARGLDLEWLIDLNRFAVKPDIVFLLDLPVKESMNRIRSRKVKSEFDKIFELQRKVRENYLKLAEMFPEMKIINAMEDVETVHNQIIALIETLLGEE</sequence>
<proteinExistence type="inferred from homology"/>
<organism>
    <name type="scientific">Thermococcus kodakarensis (strain ATCC BAA-918 / JCM 12380 / KOD1)</name>
    <name type="common">Pyrococcus kodakaraensis (strain KOD1)</name>
    <dbReference type="NCBI Taxonomy" id="69014"/>
    <lineage>
        <taxon>Archaea</taxon>
        <taxon>Methanobacteriati</taxon>
        <taxon>Methanobacteriota</taxon>
        <taxon>Thermococci</taxon>
        <taxon>Thermococcales</taxon>
        <taxon>Thermococcaceae</taxon>
        <taxon>Thermococcus</taxon>
    </lineage>
</organism>
<evidence type="ECO:0000255" key="1">
    <source>
        <dbReference type="HAMAP-Rule" id="MF_00165"/>
    </source>
</evidence>
<gene>
    <name evidence="1" type="primary">tmk</name>
    <name type="ordered locus">TK1403</name>
</gene>
<protein>
    <recommendedName>
        <fullName evidence="1">Probable thymidylate kinase</fullName>
        <ecNumber evidence="1">2.7.4.9</ecNumber>
    </recommendedName>
    <alternativeName>
        <fullName evidence="1">dTMP kinase</fullName>
    </alternativeName>
</protein>
<keyword id="KW-0067">ATP-binding</keyword>
<keyword id="KW-0418">Kinase</keyword>
<keyword id="KW-0545">Nucleotide biosynthesis</keyword>
<keyword id="KW-0547">Nucleotide-binding</keyword>
<keyword id="KW-1185">Reference proteome</keyword>
<keyword id="KW-0808">Transferase</keyword>
<comment type="catalytic activity">
    <reaction evidence="1">
        <text>dTMP + ATP = dTDP + ADP</text>
        <dbReference type="Rhea" id="RHEA:13517"/>
        <dbReference type="ChEBI" id="CHEBI:30616"/>
        <dbReference type="ChEBI" id="CHEBI:58369"/>
        <dbReference type="ChEBI" id="CHEBI:63528"/>
        <dbReference type="ChEBI" id="CHEBI:456216"/>
        <dbReference type="EC" id="2.7.4.9"/>
    </reaction>
</comment>
<comment type="similarity">
    <text evidence="1">Belongs to the thymidylate kinase family.</text>
</comment>
<feature type="chain" id="PRO_0000155396" description="Probable thymidylate kinase">
    <location>
        <begin position="1"/>
        <end position="205"/>
    </location>
</feature>
<feature type="binding site" evidence="1">
    <location>
        <begin position="7"/>
        <end position="14"/>
    </location>
    <ligand>
        <name>ATP</name>
        <dbReference type="ChEBI" id="CHEBI:30616"/>
    </ligand>
</feature>
<accession>Q5JH21</accession>
<reference key="1">
    <citation type="journal article" date="2005" name="Genome Res.">
        <title>Complete genome sequence of the hyperthermophilic archaeon Thermococcus kodakaraensis KOD1 and comparison with Pyrococcus genomes.</title>
        <authorList>
            <person name="Fukui T."/>
            <person name="Atomi H."/>
            <person name="Kanai T."/>
            <person name="Matsumi R."/>
            <person name="Fujiwara S."/>
            <person name="Imanaka T."/>
        </authorList>
    </citation>
    <scope>NUCLEOTIDE SEQUENCE [LARGE SCALE GENOMIC DNA]</scope>
    <source>
        <strain>ATCC BAA-918 / JCM 12380 / KOD1</strain>
    </source>
</reference>
<name>KTHY_THEKO</name>
<dbReference type="EC" id="2.7.4.9" evidence="1"/>
<dbReference type="EMBL" id="AP006878">
    <property type="protein sequence ID" value="BAD85592.1"/>
    <property type="molecule type" value="Genomic_DNA"/>
</dbReference>
<dbReference type="RefSeq" id="WP_011250354.1">
    <property type="nucleotide sequence ID" value="NC_006624.1"/>
</dbReference>
<dbReference type="SMR" id="Q5JH21"/>
<dbReference type="FunCoup" id="Q5JH21">
    <property type="interactions" value="139"/>
</dbReference>
<dbReference type="STRING" id="69014.TK1403"/>
<dbReference type="EnsemblBacteria" id="BAD85592">
    <property type="protein sequence ID" value="BAD85592"/>
    <property type="gene ID" value="TK1403"/>
</dbReference>
<dbReference type="GeneID" id="78447923"/>
<dbReference type="KEGG" id="tko:TK1403"/>
<dbReference type="PATRIC" id="fig|69014.16.peg.1365"/>
<dbReference type="eggNOG" id="arCOG01891">
    <property type="taxonomic scope" value="Archaea"/>
</dbReference>
<dbReference type="HOGENOM" id="CLU_049131_1_3_2"/>
<dbReference type="InParanoid" id="Q5JH21"/>
<dbReference type="OrthoDB" id="43083at2157"/>
<dbReference type="PhylomeDB" id="Q5JH21"/>
<dbReference type="Proteomes" id="UP000000536">
    <property type="component" value="Chromosome"/>
</dbReference>
<dbReference type="GO" id="GO:0005737">
    <property type="term" value="C:cytoplasm"/>
    <property type="evidence" value="ECO:0000318"/>
    <property type="project" value="GO_Central"/>
</dbReference>
<dbReference type="GO" id="GO:0005524">
    <property type="term" value="F:ATP binding"/>
    <property type="evidence" value="ECO:0007669"/>
    <property type="project" value="UniProtKB-UniRule"/>
</dbReference>
<dbReference type="GO" id="GO:0004798">
    <property type="term" value="F:dTMP kinase activity"/>
    <property type="evidence" value="ECO:0000318"/>
    <property type="project" value="GO_Central"/>
</dbReference>
<dbReference type="GO" id="GO:0006233">
    <property type="term" value="P:dTDP biosynthetic process"/>
    <property type="evidence" value="ECO:0000318"/>
    <property type="project" value="GO_Central"/>
</dbReference>
<dbReference type="GO" id="GO:0006235">
    <property type="term" value="P:dTTP biosynthetic process"/>
    <property type="evidence" value="ECO:0000318"/>
    <property type="project" value="GO_Central"/>
</dbReference>
<dbReference type="GO" id="GO:0006227">
    <property type="term" value="P:dUDP biosynthetic process"/>
    <property type="evidence" value="ECO:0000318"/>
    <property type="project" value="GO_Central"/>
</dbReference>
<dbReference type="CDD" id="cd01672">
    <property type="entry name" value="TMPK"/>
    <property type="match status" value="1"/>
</dbReference>
<dbReference type="FunFam" id="3.40.50.300:FF:000225">
    <property type="entry name" value="Thymidylate kinase"/>
    <property type="match status" value="1"/>
</dbReference>
<dbReference type="Gene3D" id="3.40.50.300">
    <property type="entry name" value="P-loop containing nucleotide triphosphate hydrolases"/>
    <property type="match status" value="1"/>
</dbReference>
<dbReference type="HAMAP" id="MF_00165">
    <property type="entry name" value="Thymidylate_kinase"/>
    <property type="match status" value="1"/>
</dbReference>
<dbReference type="InterPro" id="IPR027417">
    <property type="entry name" value="P-loop_NTPase"/>
</dbReference>
<dbReference type="InterPro" id="IPR039430">
    <property type="entry name" value="Thymidylate_kin-like_dom"/>
</dbReference>
<dbReference type="InterPro" id="IPR018095">
    <property type="entry name" value="Thymidylate_kin_CS"/>
</dbReference>
<dbReference type="InterPro" id="IPR018094">
    <property type="entry name" value="Thymidylate_kinase"/>
</dbReference>
<dbReference type="NCBIfam" id="TIGR00041">
    <property type="entry name" value="DTMP_kinase"/>
    <property type="match status" value="1"/>
</dbReference>
<dbReference type="PANTHER" id="PTHR10344">
    <property type="entry name" value="THYMIDYLATE KINASE"/>
    <property type="match status" value="1"/>
</dbReference>
<dbReference type="PANTHER" id="PTHR10344:SF4">
    <property type="entry name" value="UMP-CMP KINASE 2, MITOCHONDRIAL"/>
    <property type="match status" value="1"/>
</dbReference>
<dbReference type="Pfam" id="PF02223">
    <property type="entry name" value="Thymidylate_kin"/>
    <property type="match status" value="1"/>
</dbReference>
<dbReference type="SUPFAM" id="SSF52540">
    <property type="entry name" value="P-loop containing nucleoside triphosphate hydrolases"/>
    <property type="match status" value="1"/>
</dbReference>
<dbReference type="PROSITE" id="PS01331">
    <property type="entry name" value="THYMIDYLATE_KINASE"/>
    <property type="match status" value="1"/>
</dbReference>